<reference key="1">
    <citation type="journal article" date="2003" name="Proc. Natl. Acad. Sci. U.S.A.">
        <title>Reductive genome evolution in Buchnera aphidicola.</title>
        <authorList>
            <person name="van Ham R.C.H.J."/>
            <person name="Kamerbeek J."/>
            <person name="Palacios C."/>
            <person name="Rausell C."/>
            <person name="Abascal F."/>
            <person name="Bastolla U."/>
            <person name="Fernandez J.M."/>
            <person name="Jimenez L."/>
            <person name="Postigo M."/>
            <person name="Silva F.J."/>
            <person name="Tamames J."/>
            <person name="Viguera E."/>
            <person name="Latorre A."/>
            <person name="Valencia A."/>
            <person name="Moran F."/>
            <person name="Moya A."/>
        </authorList>
    </citation>
    <scope>NUCLEOTIDE SEQUENCE [LARGE SCALE GENOMIC DNA]</scope>
    <source>
        <strain>Bp</strain>
    </source>
</reference>
<protein>
    <recommendedName>
        <fullName>Ribosomal RNA small subunit methyltransferase D</fullName>
        <ecNumber>2.1.1.171</ecNumber>
    </recommendedName>
    <alternativeName>
        <fullName>16S rRNA m2G966 methyltransferase</fullName>
    </alternativeName>
    <alternativeName>
        <fullName>rRNA (guanine-N(2)-)-methyltransferase</fullName>
    </alternativeName>
</protein>
<keyword id="KW-0489">Methyltransferase</keyword>
<keyword id="KW-1185">Reference proteome</keyword>
<keyword id="KW-0698">rRNA processing</keyword>
<keyword id="KW-0949">S-adenosyl-L-methionine</keyword>
<keyword id="KW-0808">Transferase</keyword>
<accession>Q89B29</accession>
<gene>
    <name type="primary">rsmD</name>
    <name type="ordered locus">bbp_025</name>
</gene>
<feature type="chain" id="PRO_0000216244" description="Ribosomal RNA small subunit methyltransferase D">
    <location>
        <begin position="1"/>
        <end position="196"/>
    </location>
</feature>
<name>RSMD_BUCBP</name>
<proteinExistence type="inferred from homology"/>
<dbReference type="EC" id="2.1.1.171"/>
<dbReference type="EMBL" id="AE016826">
    <property type="protein sequence ID" value="AAO26768.1"/>
    <property type="molecule type" value="Genomic_DNA"/>
</dbReference>
<dbReference type="RefSeq" id="WP_011091169.1">
    <property type="nucleotide sequence ID" value="NC_004545.1"/>
</dbReference>
<dbReference type="SMR" id="Q89B29"/>
<dbReference type="STRING" id="224915.bbp_025"/>
<dbReference type="KEGG" id="bab:bbp_025"/>
<dbReference type="eggNOG" id="COG0742">
    <property type="taxonomic scope" value="Bacteria"/>
</dbReference>
<dbReference type="HOGENOM" id="CLU_075826_2_2_6"/>
<dbReference type="OrthoDB" id="9803017at2"/>
<dbReference type="Proteomes" id="UP000000601">
    <property type="component" value="Chromosome"/>
</dbReference>
<dbReference type="GO" id="GO:0052913">
    <property type="term" value="F:16S rRNA (guanine(966)-N(2))-methyltransferase activity"/>
    <property type="evidence" value="ECO:0007669"/>
    <property type="project" value="UniProtKB-EC"/>
</dbReference>
<dbReference type="GO" id="GO:0003676">
    <property type="term" value="F:nucleic acid binding"/>
    <property type="evidence" value="ECO:0007669"/>
    <property type="project" value="InterPro"/>
</dbReference>
<dbReference type="CDD" id="cd02440">
    <property type="entry name" value="AdoMet_MTases"/>
    <property type="match status" value="1"/>
</dbReference>
<dbReference type="Gene3D" id="3.40.50.150">
    <property type="entry name" value="Vaccinia Virus protein VP39"/>
    <property type="match status" value="1"/>
</dbReference>
<dbReference type="InterPro" id="IPR002052">
    <property type="entry name" value="DNA_methylase_N6_adenine_CS"/>
</dbReference>
<dbReference type="InterPro" id="IPR004398">
    <property type="entry name" value="RNA_MeTrfase_RsmD"/>
</dbReference>
<dbReference type="InterPro" id="IPR029063">
    <property type="entry name" value="SAM-dependent_MTases_sf"/>
</dbReference>
<dbReference type="NCBIfam" id="TIGR00095">
    <property type="entry name" value="16S rRNA (guanine(966)-N(2))-methyltransferase RsmD"/>
    <property type="match status" value="1"/>
</dbReference>
<dbReference type="PANTHER" id="PTHR43542">
    <property type="entry name" value="METHYLTRANSFERASE"/>
    <property type="match status" value="1"/>
</dbReference>
<dbReference type="PANTHER" id="PTHR43542:SF1">
    <property type="entry name" value="METHYLTRANSFERASE"/>
    <property type="match status" value="1"/>
</dbReference>
<dbReference type="Pfam" id="PF03602">
    <property type="entry name" value="Cons_hypoth95"/>
    <property type="match status" value="1"/>
</dbReference>
<dbReference type="PIRSF" id="PIRSF004553">
    <property type="entry name" value="CHP00095"/>
    <property type="match status" value="1"/>
</dbReference>
<dbReference type="SUPFAM" id="SSF53335">
    <property type="entry name" value="S-adenosyl-L-methionine-dependent methyltransferases"/>
    <property type="match status" value="1"/>
</dbReference>
<dbReference type="PROSITE" id="PS00092">
    <property type="entry name" value="N6_MTASE"/>
    <property type="match status" value="1"/>
</dbReference>
<evidence type="ECO:0000250" key="1"/>
<evidence type="ECO:0000305" key="2"/>
<organism>
    <name type="scientific">Buchnera aphidicola subsp. Baizongia pistaciae (strain Bp)</name>
    <dbReference type="NCBI Taxonomy" id="224915"/>
    <lineage>
        <taxon>Bacteria</taxon>
        <taxon>Pseudomonadati</taxon>
        <taxon>Pseudomonadota</taxon>
        <taxon>Gammaproteobacteria</taxon>
        <taxon>Enterobacterales</taxon>
        <taxon>Erwiniaceae</taxon>
        <taxon>Buchnera</taxon>
    </lineage>
</organism>
<sequence length="196" mass="22811">MKILKKKSKITSIQIISGKYKNSRIPIINTKNLRPTTNYIRETLFNWISNEKIKKSHCLDCFSGSGALGIEAVSRYALSSTCIEIQKKAIFFLKKILIKLSITNVHVIRANTIQWLKKPNKSYDIIFLDPPFKTTLLKQTIALLIKNNWLKNNALIYIEQENTLNKLITPPNNWILKKEKKTKKIHYSLYMNVNNF</sequence>
<comment type="function">
    <text evidence="1">Specifically methylates the guanine in position 966 of 16S rRNA in the assembled 30S particle.</text>
</comment>
<comment type="catalytic activity">
    <reaction>
        <text>guanosine(966) in 16S rRNA + S-adenosyl-L-methionine = N(2)-methylguanosine(966) in 16S rRNA + S-adenosyl-L-homocysteine + H(+)</text>
        <dbReference type="Rhea" id="RHEA:23548"/>
        <dbReference type="Rhea" id="RHEA-COMP:10211"/>
        <dbReference type="Rhea" id="RHEA-COMP:10212"/>
        <dbReference type="ChEBI" id="CHEBI:15378"/>
        <dbReference type="ChEBI" id="CHEBI:57856"/>
        <dbReference type="ChEBI" id="CHEBI:59789"/>
        <dbReference type="ChEBI" id="CHEBI:74269"/>
        <dbReference type="ChEBI" id="CHEBI:74481"/>
        <dbReference type="EC" id="2.1.1.171"/>
    </reaction>
</comment>
<comment type="similarity">
    <text evidence="2">Belongs to the methyltransferase superfamily. RsmD family.</text>
</comment>